<protein>
    <recommendedName>
        <fullName evidence="1">Glutamate--tRNA ligase</fullName>
        <ecNumber evidence="1">6.1.1.17</ecNumber>
    </recommendedName>
    <alternativeName>
        <fullName evidence="1">Glutamyl-tRNA synthetase</fullName>
        <shortName evidence="1">GluRS</shortName>
    </alternativeName>
</protein>
<organism>
    <name type="scientific">Sulfurihydrogenibium sp. (strain YO3AOP1)</name>
    <dbReference type="NCBI Taxonomy" id="436114"/>
    <lineage>
        <taxon>Bacteria</taxon>
        <taxon>Pseudomonadati</taxon>
        <taxon>Aquificota</taxon>
        <taxon>Aquificia</taxon>
        <taxon>Aquificales</taxon>
        <taxon>Hydrogenothermaceae</taxon>
        <taxon>Sulfurihydrogenibium</taxon>
    </lineage>
</organism>
<dbReference type="EC" id="6.1.1.17" evidence="1"/>
<dbReference type="EMBL" id="CP001080">
    <property type="protein sequence ID" value="ACD66935.1"/>
    <property type="molecule type" value="Genomic_DNA"/>
</dbReference>
<dbReference type="RefSeq" id="WP_012459994.1">
    <property type="nucleotide sequence ID" value="NC_010730.1"/>
</dbReference>
<dbReference type="SMR" id="B2V5J1"/>
<dbReference type="STRING" id="436114.SYO3AOP1_1325"/>
<dbReference type="KEGG" id="sul:SYO3AOP1_1325"/>
<dbReference type="eggNOG" id="COG0008">
    <property type="taxonomic scope" value="Bacteria"/>
</dbReference>
<dbReference type="HOGENOM" id="CLU_015768_6_3_0"/>
<dbReference type="GO" id="GO:0005829">
    <property type="term" value="C:cytosol"/>
    <property type="evidence" value="ECO:0007669"/>
    <property type="project" value="TreeGrafter"/>
</dbReference>
<dbReference type="GO" id="GO:0005524">
    <property type="term" value="F:ATP binding"/>
    <property type="evidence" value="ECO:0007669"/>
    <property type="project" value="UniProtKB-UniRule"/>
</dbReference>
<dbReference type="GO" id="GO:0004818">
    <property type="term" value="F:glutamate-tRNA ligase activity"/>
    <property type="evidence" value="ECO:0007669"/>
    <property type="project" value="UniProtKB-UniRule"/>
</dbReference>
<dbReference type="GO" id="GO:0000049">
    <property type="term" value="F:tRNA binding"/>
    <property type="evidence" value="ECO:0007669"/>
    <property type="project" value="InterPro"/>
</dbReference>
<dbReference type="GO" id="GO:0008270">
    <property type="term" value="F:zinc ion binding"/>
    <property type="evidence" value="ECO:0007669"/>
    <property type="project" value="InterPro"/>
</dbReference>
<dbReference type="GO" id="GO:0006424">
    <property type="term" value="P:glutamyl-tRNA aminoacylation"/>
    <property type="evidence" value="ECO:0007669"/>
    <property type="project" value="UniProtKB-UniRule"/>
</dbReference>
<dbReference type="CDD" id="cd00808">
    <property type="entry name" value="GluRS_core"/>
    <property type="match status" value="1"/>
</dbReference>
<dbReference type="FunFam" id="3.40.50.620:FF:000007">
    <property type="entry name" value="Glutamate--tRNA ligase"/>
    <property type="match status" value="1"/>
</dbReference>
<dbReference type="Gene3D" id="1.10.10.350">
    <property type="match status" value="1"/>
</dbReference>
<dbReference type="Gene3D" id="1.10.8.70">
    <property type="entry name" value="Glutamate-tRNA synthetase, class I, anticodon-binding domain 1"/>
    <property type="match status" value="1"/>
</dbReference>
<dbReference type="Gene3D" id="3.40.50.620">
    <property type="entry name" value="HUPs"/>
    <property type="match status" value="1"/>
</dbReference>
<dbReference type="HAMAP" id="MF_00022">
    <property type="entry name" value="Glu_tRNA_synth_type1"/>
    <property type="match status" value="1"/>
</dbReference>
<dbReference type="InterPro" id="IPR045462">
    <property type="entry name" value="aa-tRNA-synth_I_cd-bd"/>
</dbReference>
<dbReference type="InterPro" id="IPR020751">
    <property type="entry name" value="aa-tRNA-synth_I_codon-bd_sub2"/>
</dbReference>
<dbReference type="InterPro" id="IPR001412">
    <property type="entry name" value="aa-tRNA-synth_I_CS"/>
</dbReference>
<dbReference type="InterPro" id="IPR008925">
    <property type="entry name" value="aa_tRNA-synth_I_cd-bd_sf"/>
</dbReference>
<dbReference type="InterPro" id="IPR004527">
    <property type="entry name" value="Glu-tRNA-ligase_bac/mito"/>
</dbReference>
<dbReference type="InterPro" id="IPR020752">
    <property type="entry name" value="Glu-tRNA-synth_I_codon-bd_sub1"/>
</dbReference>
<dbReference type="InterPro" id="IPR000924">
    <property type="entry name" value="Glu/Gln-tRNA-synth"/>
</dbReference>
<dbReference type="InterPro" id="IPR020058">
    <property type="entry name" value="Glu/Gln-tRNA-synth_Ib_cat-dom"/>
</dbReference>
<dbReference type="InterPro" id="IPR049940">
    <property type="entry name" value="GluQ/Sye"/>
</dbReference>
<dbReference type="InterPro" id="IPR033910">
    <property type="entry name" value="GluRS_core"/>
</dbReference>
<dbReference type="InterPro" id="IPR014729">
    <property type="entry name" value="Rossmann-like_a/b/a_fold"/>
</dbReference>
<dbReference type="NCBIfam" id="TIGR00464">
    <property type="entry name" value="gltX_bact"/>
    <property type="match status" value="1"/>
</dbReference>
<dbReference type="NCBIfam" id="NF004315">
    <property type="entry name" value="PRK05710.1-4"/>
    <property type="match status" value="1"/>
</dbReference>
<dbReference type="PANTHER" id="PTHR43311">
    <property type="entry name" value="GLUTAMATE--TRNA LIGASE"/>
    <property type="match status" value="1"/>
</dbReference>
<dbReference type="PANTHER" id="PTHR43311:SF2">
    <property type="entry name" value="GLUTAMATE--TRNA LIGASE, MITOCHONDRIAL-RELATED"/>
    <property type="match status" value="1"/>
</dbReference>
<dbReference type="Pfam" id="PF19269">
    <property type="entry name" value="Anticodon_2"/>
    <property type="match status" value="1"/>
</dbReference>
<dbReference type="Pfam" id="PF00749">
    <property type="entry name" value="tRNA-synt_1c"/>
    <property type="match status" value="1"/>
</dbReference>
<dbReference type="PRINTS" id="PR00987">
    <property type="entry name" value="TRNASYNTHGLU"/>
</dbReference>
<dbReference type="SUPFAM" id="SSF48163">
    <property type="entry name" value="An anticodon-binding domain of class I aminoacyl-tRNA synthetases"/>
    <property type="match status" value="1"/>
</dbReference>
<dbReference type="SUPFAM" id="SSF52374">
    <property type="entry name" value="Nucleotidylyl transferase"/>
    <property type="match status" value="1"/>
</dbReference>
<dbReference type="PROSITE" id="PS00178">
    <property type="entry name" value="AA_TRNA_LIGASE_I"/>
    <property type="match status" value="1"/>
</dbReference>
<comment type="function">
    <text evidence="1">Catalyzes the attachment of glutamate to tRNA(Glu) in a two-step reaction: glutamate is first activated by ATP to form Glu-AMP and then transferred to the acceptor end of tRNA(Glu).</text>
</comment>
<comment type="catalytic activity">
    <reaction evidence="1">
        <text>tRNA(Glu) + L-glutamate + ATP = L-glutamyl-tRNA(Glu) + AMP + diphosphate</text>
        <dbReference type="Rhea" id="RHEA:23540"/>
        <dbReference type="Rhea" id="RHEA-COMP:9663"/>
        <dbReference type="Rhea" id="RHEA-COMP:9680"/>
        <dbReference type="ChEBI" id="CHEBI:29985"/>
        <dbReference type="ChEBI" id="CHEBI:30616"/>
        <dbReference type="ChEBI" id="CHEBI:33019"/>
        <dbReference type="ChEBI" id="CHEBI:78442"/>
        <dbReference type="ChEBI" id="CHEBI:78520"/>
        <dbReference type="ChEBI" id="CHEBI:456215"/>
        <dbReference type="EC" id="6.1.1.17"/>
    </reaction>
</comment>
<comment type="subunit">
    <text evidence="1">Monomer.</text>
</comment>
<comment type="subcellular location">
    <subcellularLocation>
        <location evidence="1">Cytoplasm</location>
    </subcellularLocation>
</comment>
<comment type="similarity">
    <text evidence="1">Belongs to the class-I aminoacyl-tRNA synthetase family. Glutamate--tRNA ligase type 1 subfamily.</text>
</comment>
<sequence length="478" mass="55797">MKRVRFAPSPTGYLHLGNARTALFNYLFSRHENATFILRIEDTDLERSKKEYEEMLMEDLKWMGIEWDEGPDAGGPHGPYRQSERLEIYMKYVDKLLKSGDAYYCYCTEEELEQEREKAIAEGRPYRYSGKCRNLTPEERAFYEGKSIKPVIRFKVPDKTVVFEDIIRGHVEIDTKEFGDFVIVRQDGMPVYNFVVVIDDALMGITHVIRGEDHLSNTPKQIVIYEALGFAIPQFAHLPIILGEDRTKLSKRHGAVSVRALKDDGFISEAVFNYLSLLGWHPKEEKEILSKEEIIKQFRIEDVNKSPAIFDRTKLRWMNGVYIREILDLDDLTKRAIPFFEGFGYKADYEFYKKVMSAIRDSIETLMEIKERAKVFFVDEFPYTEEIVNEVKSDENVYKVVEIFYNKIKNLSAITKEDFKNITKEIQKEYGYKGKALFHPIRIALTGEPSGVGLDLLVEVIGIERVKFRLERFLEYFG</sequence>
<gene>
    <name evidence="1" type="primary">gltX</name>
    <name type="ordered locus">SYO3AOP1_1325</name>
</gene>
<evidence type="ECO:0000255" key="1">
    <source>
        <dbReference type="HAMAP-Rule" id="MF_00022"/>
    </source>
</evidence>
<name>SYE_SULSY</name>
<feature type="chain" id="PRO_0000367776" description="Glutamate--tRNA ligase">
    <location>
        <begin position="1"/>
        <end position="478"/>
    </location>
</feature>
<feature type="short sequence motif" description="'HIGH' region" evidence="1">
    <location>
        <begin position="8"/>
        <end position="18"/>
    </location>
</feature>
<feature type="short sequence motif" description="'KMSKS' region" evidence="1">
    <location>
        <begin position="248"/>
        <end position="252"/>
    </location>
</feature>
<feature type="binding site" evidence="1">
    <location>
        <position position="251"/>
    </location>
    <ligand>
        <name>ATP</name>
        <dbReference type="ChEBI" id="CHEBI:30616"/>
    </ligand>
</feature>
<keyword id="KW-0030">Aminoacyl-tRNA synthetase</keyword>
<keyword id="KW-0067">ATP-binding</keyword>
<keyword id="KW-0963">Cytoplasm</keyword>
<keyword id="KW-0436">Ligase</keyword>
<keyword id="KW-0547">Nucleotide-binding</keyword>
<keyword id="KW-0648">Protein biosynthesis</keyword>
<accession>B2V5J1</accession>
<proteinExistence type="inferred from homology"/>
<reference key="1">
    <citation type="journal article" date="2009" name="J. Bacteriol.">
        <title>Complete and draft genome sequences of six members of the Aquificales.</title>
        <authorList>
            <person name="Reysenbach A.-L."/>
            <person name="Hamamura N."/>
            <person name="Podar M."/>
            <person name="Griffiths E."/>
            <person name="Ferreira S."/>
            <person name="Hochstein R."/>
            <person name="Heidelberg J."/>
            <person name="Johnson J."/>
            <person name="Mead D."/>
            <person name="Pohorille A."/>
            <person name="Sarmiento M."/>
            <person name="Schweighofer K."/>
            <person name="Seshadri R."/>
            <person name="Voytek M.A."/>
        </authorList>
    </citation>
    <scope>NUCLEOTIDE SEQUENCE [LARGE SCALE GENOMIC DNA]</scope>
    <source>
        <strain>YO3AOP1</strain>
    </source>
</reference>